<name>ATPD_MOOTA</name>
<reference key="1">
    <citation type="journal article" date="1997" name="J. Bacteriol.">
        <title>Composition and primary structure of the F1F0 ATP synthase from the obligately anaerobic bacterium Clostridium thermoaceticum.</title>
        <authorList>
            <person name="Das A."/>
            <person name="Ljungdahl L.G."/>
        </authorList>
    </citation>
    <scope>NUCLEOTIDE SEQUENCE [GENOMIC DNA]</scope>
    <scope>SUBUNIT</scope>
    <scope>OPERON STRUCTURE</scope>
</reference>
<reference key="2">
    <citation type="journal article" date="2008" name="Environ. Microbiol.">
        <title>The complete genome sequence of Moorella thermoacetica (f. Clostridium thermoaceticum).</title>
        <authorList>
            <person name="Pierce E."/>
            <person name="Xie G."/>
            <person name="Barabote R.D."/>
            <person name="Saunders E."/>
            <person name="Han C.S."/>
            <person name="Detter J.C."/>
            <person name="Richardson P."/>
            <person name="Brettin T.S."/>
            <person name="Das A."/>
            <person name="Ljungdahl L.G."/>
            <person name="Ragsdale S.W."/>
        </authorList>
    </citation>
    <scope>NUCLEOTIDE SEQUENCE [LARGE SCALE GENOMIC DNA]</scope>
    <source>
        <strain>ATCC 39073 / JCM 9320</strain>
    </source>
</reference>
<proteinExistence type="evidence at protein level"/>
<keyword id="KW-0066">ATP synthesis</keyword>
<keyword id="KW-1003">Cell membrane</keyword>
<keyword id="KW-0139">CF(1)</keyword>
<keyword id="KW-0375">Hydrogen ion transport</keyword>
<keyword id="KW-0406">Ion transport</keyword>
<keyword id="KW-0472">Membrane</keyword>
<keyword id="KW-0813">Transport</keyword>
<gene>
    <name evidence="1" type="primary">atpH</name>
    <name type="ordered locus">Moth_2381</name>
</gene>
<accession>Q2RFX6</accession>
<accession>O05430</accession>
<comment type="function">
    <text evidence="1">F(1)F(0) ATP synthase produces ATP from ADP in the presence of a proton or sodium gradient. F-type ATPases consist of two structural domains, F(1) containing the extramembraneous catalytic core and F(0) containing the membrane proton channel, linked together by a central stalk and a peripheral stalk. During catalysis, ATP synthesis in the catalytic domain of F(1) is coupled via a rotary mechanism of the central stalk subunits to proton translocation.</text>
</comment>
<comment type="function">
    <text evidence="1">This protein is part of the stalk that links CF(0) to CF(1). It either transmits conformational changes from CF(0) to CF(1) or is implicated in proton conduction.</text>
</comment>
<comment type="subunit">
    <text evidence="1">F-type ATPases have 2 components, F(1) - the catalytic core - and F(0) - the membrane proton channel. F(1) has five subunits: alpha(3), beta(3), gamma(1), delta(1), epsilon(1). F(0) has three main subunits: a(1), b(2) and c(10-14). The alpha and beta chains form an alternating ring which encloses part of the gamma chain. F(1) is attached to F(0) by a central stalk formed by the gamma and epsilon chains, while a peripheral stalk is formed by the delta and b chains.</text>
</comment>
<comment type="subcellular location">
    <subcellularLocation>
        <location evidence="1">Cell membrane</location>
        <topology evidence="1">Peripheral membrane protein</topology>
    </subcellularLocation>
</comment>
<comment type="similarity">
    <text evidence="1">Belongs to the ATPase delta chain family.</text>
</comment>
<organism>
    <name type="scientific">Moorella thermoacetica (strain ATCC 39073 / JCM 9320)</name>
    <dbReference type="NCBI Taxonomy" id="264732"/>
    <lineage>
        <taxon>Bacteria</taxon>
        <taxon>Bacillati</taxon>
        <taxon>Bacillota</taxon>
        <taxon>Clostridia</taxon>
        <taxon>Moorellales</taxon>
        <taxon>Moorellaceae</taxon>
        <taxon>Moorella</taxon>
    </lineage>
</organism>
<feature type="chain" id="PRO_0000371028" description="ATP synthase subunit delta">
    <location>
        <begin position="1"/>
        <end position="178"/>
    </location>
</feature>
<dbReference type="EMBL" id="U64318">
    <property type="protein sequence ID" value="AAB51463.1"/>
    <property type="molecule type" value="Genomic_DNA"/>
</dbReference>
<dbReference type="EMBL" id="CP000232">
    <property type="protein sequence ID" value="ABC20663.1"/>
    <property type="molecule type" value="Genomic_DNA"/>
</dbReference>
<dbReference type="RefSeq" id="YP_431206.1">
    <property type="nucleotide sequence ID" value="NC_007644.1"/>
</dbReference>
<dbReference type="SMR" id="Q2RFX6"/>
<dbReference type="STRING" id="264732.Moth_2381"/>
<dbReference type="EnsemblBacteria" id="ABC20663">
    <property type="protein sequence ID" value="ABC20663"/>
    <property type="gene ID" value="Moth_2381"/>
</dbReference>
<dbReference type="GeneID" id="45618418"/>
<dbReference type="KEGG" id="mta:Moth_2381"/>
<dbReference type="PATRIC" id="fig|264732.11.peg.2594"/>
<dbReference type="eggNOG" id="COG0712">
    <property type="taxonomic scope" value="Bacteria"/>
</dbReference>
<dbReference type="HOGENOM" id="CLU_085114_4_2_9"/>
<dbReference type="OrthoDB" id="9802471at2"/>
<dbReference type="GO" id="GO:0005886">
    <property type="term" value="C:plasma membrane"/>
    <property type="evidence" value="ECO:0007669"/>
    <property type="project" value="UniProtKB-SubCell"/>
</dbReference>
<dbReference type="GO" id="GO:0045259">
    <property type="term" value="C:proton-transporting ATP synthase complex"/>
    <property type="evidence" value="ECO:0007669"/>
    <property type="project" value="UniProtKB-KW"/>
</dbReference>
<dbReference type="GO" id="GO:0046933">
    <property type="term" value="F:proton-transporting ATP synthase activity, rotational mechanism"/>
    <property type="evidence" value="ECO:0007669"/>
    <property type="project" value="UniProtKB-UniRule"/>
</dbReference>
<dbReference type="Gene3D" id="1.10.520.20">
    <property type="entry name" value="N-terminal domain of the delta subunit of the F1F0-ATP synthase"/>
    <property type="match status" value="1"/>
</dbReference>
<dbReference type="HAMAP" id="MF_01416">
    <property type="entry name" value="ATP_synth_delta_bact"/>
    <property type="match status" value="1"/>
</dbReference>
<dbReference type="InterPro" id="IPR026015">
    <property type="entry name" value="ATP_synth_OSCP/delta_N_sf"/>
</dbReference>
<dbReference type="InterPro" id="IPR020781">
    <property type="entry name" value="ATPase_OSCP/d_CS"/>
</dbReference>
<dbReference type="InterPro" id="IPR000711">
    <property type="entry name" value="ATPase_OSCP/dsu"/>
</dbReference>
<dbReference type="NCBIfam" id="TIGR01145">
    <property type="entry name" value="ATP_synt_delta"/>
    <property type="match status" value="1"/>
</dbReference>
<dbReference type="NCBIfam" id="NF004402">
    <property type="entry name" value="PRK05758.2-2"/>
    <property type="match status" value="1"/>
</dbReference>
<dbReference type="PANTHER" id="PTHR11910">
    <property type="entry name" value="ATP SYNTHASE DELTA CHAIN"/>
    <property type="match status" value="1"/>
</dbReference>
<dbReference type="Pfam" id="PF00213">
    <property type="entry name" value="OSCP"/>
    <property type="match status" value="1"/>
</dbReference>
<dbReference type="PRINTS" id="PR00125">
    <property type="entry name" value="ATPASEDELTA"/>
</dbReference>
<dbReference type="SUPFAM" id="SSF47928">
    <property type="entry name" value="N-terminal domain of the delta subunit of the F1F0-ATP synthase"/>
    <property type="match status" value="1"/>
</dbReference>
<dbReference type="PROSITE" id="PS00389">
    <property type="entry name" value="ATPASE_DELTA"/>
    <property type="match status" value="1"/>
</dbReference>
<evidence type="ECO:0000255" key="1">
    <source>
        <dbReference type="HAMAP-Rule" id="MF_01416"/>
    </source>
</evidence>
<sequence>MSEQNVARRYARALFNIAREQGTAGEFANGLEEVSRTLAENSDFRRVLYHQLIPVREKQKLIDTIFPDINPLLKNFLHLVLAKGRERALPEMAAQFRRLVDQAENILPVEVTSAITLREDILAGLKERLAGITRRNIRLSSRVNPELIGGVVIRLGDRVLDASVKKKLELLGEHLKRA</sequence>
<protein>
    <recommendedName>
        <fullName evidence="1">ATP synthase subunit delta</fullName>
    </recommendedName>
    <alternativeName>
        <fullName evidence="1">ATP synthase F(1) sector subunit delta</fullName>
    </alternativeName>
    <alternativeName>
        <fullName evidence="1">F-type ATPase subunit delta</fullName>
        <shortName evidence="1">F-ATPase subunit delta</shortName>
    </alternativeName>
</protein>